<proteinExistence type="inferred from homology"/>
<organism>
    <name type="scientific">Staphylococcus aureus (strain Mu50 / ATCC 700699)</name>
    <dbReference type="NCBI Taxonomy" id="158878"/>
    <lineage>
        <taxon>Bacteria</taxon>
        <taxon>Bacillati</taxon>
        <taxon>Bacillota</taxon>
        <taxon>Bacilli</taxon>
        <taxon>Bacillales</taxon>
        <taxon>Staphylococcaceae</taxon>
        <taxon>Staphylococcus</taxon>
    </lineage>
</organism>
<gene>
    <name type="ordered locus">SAV2309</name>
</gene>
<evidence type="ECO:0000250" key="1"/>
<evidence type="ECO:0000255" key="2">
    <source>
        <dbReference type="PROSITE-ProRule" id="PRU00465"/>
    </source>
</evidence>
<evidence type="ECO:0000255" key="3">
    <source>
        <dbReference type="PROSITE-ProRule" id="PRU00711"/>
    </source>
</evidence>
<evidence type="ECO:0000255" key="4">
    <source>
        <dbReference type="PROSITE-ProRule" id="PRU01004"/>
    </source>
</evidence>
<evidence type="ECO:0000255" key="5">
    <source>
        <dbReference type="PROSITE-ProRule" id="PRU01184"/>
    </source>
</evidence>
<evidence type="ECO:0000305" key="6"/>
<reference key="1">
    <citation type="journal article" date="2001" name="Lancet">
        <title>Whole genome sequencing of meticillin-resistant Staphylococcus aureus.</title>
        <authorList>
            <person name="Kuroda M."/>
            <person name="Ohta T."/>
            <person name="Uchiyama I."/>
            <person name="Baba T."/>
            <person name="Yuzawa H."/>
            <person name="Kobayashi I."/>
            <person name="Cui L."/>
            <person name="Oguchi A."/>
            <person name="Aoki K."/>
            <person name="Nagai Y."/>
            <person name="Lian J.-Q."/>
            <person name="Ito T."/>
            <person name="Kanamori M."/>
            <person name="Matsumaru H."/>
            <person name="Maruyama A."/>
            <person name="Murakami H."/>
            <person name="Hosoyama A."/>
            <person name="Mizutani-Ui Y."/>
            <person name="Takahashi N.K."/>
            <person name="Sawano T."/>
            <person name="Inoue R."/>
            <person name="Kaito C."/>
            <person name="Sekimizu K."/>
            <person name="Hirakawa H."/>
            <person name="Kuhara S."/>
            <person name="Goto S."/>
            <person name="Yabuzaki J."/>
            <person name="Kanehisa M."/>
            <person name="Yamashita A."/>
            <person name="Oshima K."/>
            <person name="Furuya K."/>
            <person name="Yoshino C."/>
            <person name="Shiba T."/>
            <person name="Hattori M."/>
            <person name="Ogasawara N."/>
            <person name="Hayashi H."/>
            <person name="Hiramatsu K."/>
        </authorList>
    </citation>
    <scope>NUCLEOTIDE SEQUENCE [LARGE SCALE GENOMIC DNA]</scope>
    <source>
        <strain>Mu50 / ATCC 700699</strain>
    </source>
</reference>
<accession>Q931G2</accession>
<comment type="catalytic activity">
    <reaction>
        <text>formate + NAD(+) = CO2 + NADH</text>
        <dbReference type="Rhea" id="RHEA:15985"/>
        <dbReference type="ChEBI" id="CHEBI:15740"/>
        <dbReference type="ChEBI" id="CHEBI:16526"/>
        <dbReference type="ChEBI" id="CHEBI:57540"/>
        <dbReference type="ChEBI" id="CHEBI:57945"/>
        <dbReference type="EC" id="1.17.1.9"/>
    </reaction>
</comment>
<comment type="cofactor">
    <cofactor evidence="1">
        <name>[2Fe-2S] cluster</name>
        <dbReference type="ChEBI" id="CHEBI:190135"/>
    </cofactor>
    <text evidence="1">Binds 1 [2Fe-2S] cluster.</text>
</comment>
<comment type="cofactor">
    <cofactor evidence="1">
        <name>[4Fe-4S] cluster</name>
        <dbReference type="ChEBI" id="CHEBI:49883"/>
    </cofactor>
    <text evidence="1">Binds 4 [4Fe-4S] clusters.</text>
</comment>
<comment type="cofactor">
    <cofactor evidence="1">
        <name>Mo-bis(molybdopterin guanine dinucleotide)</name>
        <dbReference type="ChEBI" id="CHEBI:60539"/>
    </cofactor>
    <text evidence="1">Binds 1 molybdenum-bis(molybdopterin guanine dinucleotide) (Mo-bis-MGD) cofactor per subunit.</text>
</comment>
<comment type="similarity">
    <text evidence="6">In the C-terminal section; belongs to the prokaryotic molybdopterin-containing oxidoreductase family.</text>
</comment>
<dbReference type="EC" id="1.17.1.9"/>
<dbReference type="EMBL" id="BA000017">
    <property type="protein sequence ID" value="BAB58471.1"/>
    <property type="molecule type" value="Genomic_DNA"/>
</dbReference>
<dbReference type="SMR" id="Q931G2"/>
<dbReference type="KEGG" id="sav:SAV2309"/>
<dbReference type="HOGENOM" id="CLU_000422_2_1_9"/>
<dbReference type="PhylomeDB" id="Q931G2"/>
<dbReference type="Proteomes" id="UP000002481">
    <property type="component" value="Chromosome"/>
</dbReference>
<dbReference type="GO" id="GO:0016020">
    <property type="term" value="C:membrane"/>
    <property type="evidence" value="ECO:0007669"/>
    <property type="project" value="TreeGrafter"/>
</dbReference>
<dbReference type="GO" id="GO:0051537">
    <property type="term" value="F:2 iron, 2 sulfur cluster binding"/>
    <property type="evidence" value="ECO:0007669"/>
    <property type="project" value="UniProtKB-KW"/>
</dbReference>
<dbReference type="GO" id="GO:0051539">
    <property type="term" value="F:4 iron, 4 sulfur cluster binding"/>
    <property type="evidence" value="ECO:0007669"/>
    <property type="project" value="UniProtKB-KW"/>
</dbReference>
<dbReference type="GO" id="GO:0008863">
    <property type="term" value="F:formate dehydrogenase (NAD+) activity"/>
    <property type="evidence" value="ECO:0007669"/>
    <property type="project" value="UniProtKB-EC"/>
</dbReference>
<dbReference type="GO" id="GO:0046872">
    <property type="term" value="F:metal ion binding"/>
    <property type="evidence" value="ECO:0007669"/>
    <property type="project" value="UniProtKB-KW"/>
</dbReference>
<dbReference type="GO" id="GO:0043546">
    <property type="term" value="F:molybdopterin cofactor binding"/>
    <property type="evidence" value="ECO:0007669"/>
    <property type="project" value="InterPro"/>
</dbReference>
<dbReference type="GO" id="GO:0003954">
    <property type="term" value="F:NADH dehydrogenase activity"/>
    <property type="evidence" value="ECO:0007669"/>
    <property type="project" value="TreeGrafter"/>
</dbReference>
<dbReference type="GO" id="GO:0015942">
    <property type="term" value="P:formate metabolic process"/>
    <property type="evidence" value="ECO:0007669"/>
    <property type="project" value="InterPro"/>
</dbReference>
<dbReference type="GO" id="GO:0022904">
    <property type="term" value="P:respiratory electron transport chain"/>
    <property type="evidence" value="ECO:0007669"/>
    <property type="project" value="TreeGrafter"/>
</dbReference>
<dbReference type="CDD" id="cd00207">
    <property type="entry name" value="fer2"/>
    <property type="match status" value="1"/>
</dbReference>
<dbReference type="CDD" id="cd02792">
    <property type="entry name" value="MopB_CT_Formate-Dh-Na-like"/>
    <property type="match status" value="1"/>
</dbReference>
<dbReference type="CDD" id="cd02753">
    <property type="entry name" value="MopB_Formate-Dh-H"/>
    <property type="match status" value="1"/>
</dbReference>
<dbReference type="FunFam" id="2.20.25.90:FF:000001">
    <property type="entry name" value="Formate dehydrogenase subunit alpha"/>
    <property type="match status" value="1"/>
</dbReference>
<dbReference type="FunFam" id="3.10.20.740:FF:000003">
    <property type="entry name" value="Formate dehydrogenase subunit alpha"/>
    <property type="match status" value="1"/>
</dbReference>
<dbReference type="FunFam" id="3.40.228.10:FF:000002">
    <property type="entry name" value="Formate dehydrogenase subunit alpha"/>
    <property type="match status" value="1"/>
</dbReference>
<dbReference type="FunFam" id="3.30.70.20:FF:000032">
    <property type="entry name" value="Formate dehydrogenase, alpha subunit"/>
    <property type="match status" value="1"/>
</dbReference>
<dbReference type="FunFam" id="2.40.40.20:FF:000005">
    <property type="entry name" value="Periplasmic nitrate reductase"/>
    <property type="match status" value="1"/>
</dbReference>
<dbReference type="Gene3D" id="2.40.40.20">
    <property type="match status" value="1"/>
</dbReference>
<dbReference type="Gene3D" id="3.10.20.740">
    <property type="match status" value="1"/>
</dbReference>
<dbReference type="Gene3D" id="3.30.70.20">
    <property type="match status" value="1"/>
</dbReference>
<dbReference type="Gene3D" id="3.40.50.740">
    <property type="match status" value="1"/>
</dbReference>
<dbReference type="Gene3D" id="2.20.25.90">
    <property type="entry name" value="ADC-like domains"/>
    <property type="match status" value="1"/>
</dbReference>
<dbReference type="Gene3D" id="3.40.228.10">
    <property type="entry name" value="Dimethylsulfoxide Reductase, domain 2"/>
    <property type="match status" value="1"/>
</dbReference>
<dbReference type="InterPro" id="IPR036010">
    <property type="entry name" value="2Fe-2S_ferredoxin-like_sf"/>
</dbReference>
<dbReference type="InterPro" id="IPR001041">
    <property type="entry name" value="2Fe-2S_ferredoxin-type"/>
</dbReference>
<dbReference type="InterPro" id="IPR017896">
    <property type="entry name" value="4Fe4S_Fe-S-bd"/>
</dbReference>
<dbReference type="InterPro" id="IPR017900">
    <property type="entry name" value="4Fe4S_Fe_S_CS"/>
</dbReference>
<dbReference type="InterPro" id="IPR009010">
    <property type="entry name" value="Asp_de-COase-like_dom_sf"/>
</dbReference>
<dbReference type="InterPro" id="IPR041924">
    <property type="entry name" value="Formate_Dh-H_N"/>
</dbReference>
<dbReference type="InterPro" id="IPR006478">
    <property type="entry name" value="Formate_DH_asu"/>
</dbReference>
<dbReference type="InterPro" id="IPR006657">
    <property type="entry name" value="MoPterin_dinucl-bd_dom"/>
</dbReference>
<dbReference type="InterPro" id="IPR006656">
    <property type="entry name" value="Mopterin_OxRdtase"/>
</dbReference>
<dbReference type="InterPro" id="IPR006963">
    <property type="entry name" value="Mopterin_OxRdtase_4Fe-4S_dom"/>
</dbReference>
<dbReference type="InterPro" id="IPR006655">
    <property type="entry name" value="Mopterin_OxRdtase_prok_CS"/>
</dbReference>
<dbReference type="InterPro" id="IPR027467">
    <property type="entry name" value="MopterinOxRdtase_cofactor_BS"/>
</dbReference>
<dbReference type="InterPro" id="IPR019574">
    <property type="entry name" value="NADH_UbQ_OxRdtase_Gsu_4Fe4S-bd"/>
</dbReference>
<dbReference type="InterPro" id="IPR050123">
    <property type="entry name" value="Prok_molybdopt-oxidoreductase"/>
</dbReference>
<dbReference type="NCBIfam" id="TIGR01591">
    <property type="entry name" value="Fdh-alpha"/>
    <property type="match status" value="1"/>
</dbReference>
<dbReference type="PANTHER" id="PTHR43105:SF14">
    <property type="entry name" value="FORMATE DEHYDROGENASE H"/>
    <property type="match status" value="1"/>
</dbReference>
<dbReference type="PANTHER" id="PTHR43105">
    <property type="entry name" value="RESPIRATORY NITRATE REDUCTASE"/>
    <property type="match status" value="1"/>
</dbReference>
<dbReference type="Pfam" id="PF13510">
    <property type="entry name" value="Fer2_4"/>
    <property type="match status" value="1"/>
</dbReference>
<dbReference type="Pfam" id="PF12838">
    <property type="entry name" value="Fer4_7"/>
    <property type="match status" value="1"/>
</dbReference>
<dbReference type="Pfam" id="PF04879">
    <property type="entry name" value="Molybdop_Fe4S4"/>
    <property type="match status" value="1"/>
</dbReference>
<dbReference type="Pfam" id="PF00384">
    <property type="entry name" value="Molybdopterin"/>
    <property type="match status" value="1"/>
</dbReference>
<dbReference type="Pfam" id="PF01568">
    <property type="entry name" value="Molydop_binding"/>
    <property type="match status" value="1"/>
</dbReference>
<dbReference type="Pfam" id="PF10588">
    <property type="entry name" value="NADH-G_4Fe-4S_3"/>
    <property type="match status" value="1"/>
</dbReference>
<dbReference type="PIRSF" id="PIRSF036643">
    <property type="entry name" value="FDH_alpha"/>
    <property type="match status" value="1"/>
</dbReference>
<dbReference type="SMART" id="SM00926">
    <property type="entry name" value="Molybdop_Fe4S4"/>
    <property type="match status" value="1"/>
</dbReference>
<dbReference type="SMART" id="SM00929">
    <property type="entry name" value="NADH-G_4Fe-4S_3"/>
    <property type="match status" value="1"/>
</dbReference>
<dbReference type="SUPFAM" id="SSF54292">
    <property type="entry name" value="2Fe-2S ferredoxin-like"/>
    <property type="match status" value="1"/>
</dbReference>
<dbReference type="SUPFAM" id="SSF54862">
    <property type="entry name" value="4Fe-4S ferredoxins"/>
    <property type="match status" value="1"/>
</dbReference>
<dbReference type="SUPFAM" id="SSF50692">
    <property type="entry name" value="ADC-like"/>
    <property type="match status" value="1"/>
</dbReference>
<dbReference type="SUPFAM" id="SSF53706">
    <property type="entry name" value="Formate dehydrogenase/DMSO reductase, domains 1-3"/>
    <property type="match status" value="1"/>
</dbReference>
<dbReference type="PROSITE" id="PS51085">
    <property type="entry name" value="2FE2S_FER_2"/>
    <property type="match status" value="1"/>
</dbReference>
<dbReference type="PROSITE" id="PS00198">
    <property type="entry name" value="4FE4S_FER_1"/>
    <property type="match status" value="1"/>
</dbReference>
<dbReference type="PROSITE" id="PS51379">
    <property type="entry name" value="4FE4S_FER_2"/>
    <property type="match status" value="2"/>
</dbReference>
<dbReference type="PROSITE" id="PS51839">
    <property type="entry name" value="4FE4S_HC3"/>
    <property type="match status" value="1"/>
</dbReference>
<dbReference type="PROSITE" id="PS51669">
    <property type="entry name" value="4FE4S_MOW_BIS_MGD"/>
    <property type="match status" value="1"/>
</dbReference>
<dbReference type="PROSITE" id="PS00551">
    <property type="entry name" value="MOLYBDOPTERIN_PROK_1"/>
    <property type="match status" value="1"/>
</dbReference>
<dbReference type="PROSITE" id="PS00932">
    <property type="entry name" value="MOLYBDOPTERIN_PROK_3"/>
    <property type="match status" value="1"/>
</dbReference>
<feature type="chain" id="PRO_0000304132" description="Putative formate dehydrogenase SAV2309">
    <location>
        <begin position="1"/>
        <end position="984"/>
    </location>
</feature>
<feature type="domain" description="2Fe-2S ferredoxin-type" evidence="2">
    <location>
        <begin position="3"/>
        <end position="79"/>
    </location>
</feature>
<feature type="domain" description="4Fe-4S His(Cys)3-ligated-type" evidence="5">
    <location>
        <begin position="79"/>
        <end position="119"/>
    </location>
</feature>
<feature type="domain" description="4Fe-4S ferredoxin-type 1" evidence="3">
    <location>
        <begin position="138"/>
        <end position="165"/>
    </location>
</feature>
<feature type="domain" description="4Fe-4S ferredoxin-type 2" evidence="3">
    <location>
        <begin position="181"/>
        <end position="211"/>
    </location>
</feature>
<feature type="domain" description="4Fe-4S Mo/W bis-MGD-type" evidence="4">
    <location>
        <begin position="257"/>
        <end position="313"/>
    </location>
</feature>
<feature type="region of interest" description="Formate dehydrogenase">
    <location>
        <begin position="252"/>
        <end position="984"/>
    </location>
</feature>
<feature type="binding site" evidence="1">
    <location>
        <position position="37"/>
    </location>
    <ligand>
        <name>[2Fe-2S] cluster</name>
        <dbReference type="ChEBI" id="CHEBI:190135"/>
    </ligand>
</feature>
<feature type="binding site" evidence="1">
    <location>
        <position position="48"/>
    </location>
    <ligand>
        <name>[2Fe-2S] cluster</name>
        <dbReference type="ChEBI" id="CHEBI:190135"/>
    </ligand>
</feature>
<feature type="binding site" evidence="1">
    <location>
        <position position="51"/>
    </location>
    <ligand>
        <name>[2Fe-2S] cluster</name>
        <dbReference type="ChEBI" id="CHEBI:190135"/>
    </ligand>
</feature>
<feature type="binding site" evidence="1">
    <location>
        <position position="63"/>
    </location>
    <ligand>
        <name>[2Fe-2S] cluster</name>
        <dbReference type="ChEBI" id="CHEBI:190135"/>
    </ligand>
</feature>
<feature type="binding site" evidence="5">
    <location>
        <position position="95"/>
    </location>
    <ligand>
        <name>[4Fe-4S] cluster</name>
        <dbReference type="ChEBI" id="CHEBI:49883"/>
        <label>1</label>
    </ligand>
</feature>
<feature type="binding site" evidence="5">
    <location>
        <position position="99"/>
    </location>
    <ligand>
        <name>[4Fe-4S] cluster</name>
        <dbReference type="ChEBI" id="CHEBI:49883"/>
        <label>1</label>
    </ligand>
</feature>
<feature type="binding site" evidence="5">
    <location>
        <position position="102"/>
    </location>
    <ligand>
        <name>[4Fe-4S] cluster</name>
        <dbReference type="ChEBI" id="CHEBI:49883"/>
        <label>1</label>
    </ligand>
</feature>
<feature type="binding site" evidence="5">
    <location>
        <position position="109"/>
    </location>
    <ligand>
        <name>[4Fe-4S] cluster</name>
        <dbReference type="ChEBI" id="CHEBI:49883"/>
        <label>1</label>
    </ligand>
</feature>
<feature type="binding site" evidence="1">
    <location>
        <position position="147"/>
    </location>
    <ligand>
        <name>[4Fe-4S] cluster</name>
        <dbReference type="ChEBI" id="CHEBI:49883"/>
        <label>2</label>
    </ligand>
</feature>
<feature type="binding site" evidence="1">
    <location>
        <position position="150"/>
    </location>
    <ligand>
        <name>[4Fe-4S] cluster</name>
        <dbReference type="ChEBI" id="CHEBI:49883"/>
        <label>2</label>
    </ligand>
</feature>
<feature type="binding site" evidence="1">
    <location>
        <position position="153"/>
    </location>
    <ligand>
        <name>[4Fe-4S] cluster</name>
        <dbReference type="ChEBI" id="CHEBI:49883"/>
        <label>2</label>
    </ligand>
</feature>
<feature type="binding site" evidence="1">
    <location>
        <position position="157"/>
    </location>
    <ligand>
        <name>[4Fe-4S] cluster</name>
        <dbReference type="ChEBI" id="CHEBI:49883"/>
        <label>3</label>
    </ligand>
</feature>
<feature type="binding site" evidence="1">
    <location>
        <position position="190"/>
    </location>
    <ligand>
        <name>[4Fe-4S] cluster</name>
        <dbReference type="ChEBI" id="CHEBI:49883"/>
        <label>3</label>
    </ligand>
</feature>
<feature type="binding site" evidence="1">
    <location>
        <position position="193"/>
    </location>
    <ligand>
        <name>[4Fe-4S] cluster</name>
        <dbReference type="ChEBI" id="CHEBI:49883"/>
        <label>3</label>
    </ligand>
</feature>
<feature type="binding site" evidence="1">
    <location>
        <position position="196"/>
    </location>
    <ligand>
        <name>[4Fe-4S] cluster</name>
        <dbReference type="ChEBI" id="CHEBI:49883"/>
        <label>3</label>
    </ligand>
</feature>
<feature type="binding site" evidence="1">
    <location>
        <position position="200"/>
    </location>
    <ligand>
        <name>[4Fe-4S] cluster</name>
        <dbReference type="ChEBI" id="CHEBI:49883"/>
        <label>2</label>
    </ligand>
</feature>
<feature type="binding site" evidence="1">
    <location>
        <position position="264"/>
    </location>
    <ligand>
        <name>[4Fe-4S] cluster</name>
        <dbReference type="ChEBI" id="CHEBI:49883"/>
        <label>4</label>
    </ligand>
</feature>
<feature type="binding site" evidence="1">
    <location>
        <position position="267"/>
    </location>
    <ligand>
        <name>[4Fe-4S] cluster</name>
        <dbReference type="ChEBI" id="CHEBI:49883"/>
        <label>4</label>
    </ligand>
</feature>
<feature type="binding site" evidence="1">
    <location>
        <position position="271"/>
    </location>
    <ligand>
        <name>[4Fe-4S] cluster</name>
        <dbReference type="ChEBI" id="CHEBI:49883"/>
        <label>4</label>
    </ligand>
</feature>
<feature type="binding site" evidence="1">
    <location>
        <position position="299"/>
    </location>
    <ligand>
        <name>[4Fe-4S] cluster</name>
        <dbReference type="ChEBI" id="CHEBI:49883"/>
        <label>4</label>
    </ligand>
</feature>
<sequence length="984" mass="111323">MQEHLVVTLDGKDYLVEPGTNLLEFIKSQDTFVPSICYNESMGPIQTCDTCTVEIDGKIERSCSTVIDRPMTVNTVNNDVKDAQKEALDRILEKHMLYCTVCDYNNGDCEIHNTMDAWGLQHQTYEYKEKPYEKDYGPFYRYDPNQCILCGRCVEACQDIEVNETIRIDWDREHPRVIWDNDVPINESSCVSCGQCATVCPCNAMMEVNMEGNAGYMTDTEPGSLAAMIDLTKKAEPGYGPLFAISDSEAEMRKERIKKTKTVCTYCGVGCSFEVWTKDREILKVQPSHDSPANKIVTCVKGKFSWGHINSDQRLTKPLVRKNGEFHEVEWDEALNVIADNFTSIKEKYGPDALSFISSSKATNEESYLMQKLARQVIGTNNVDNCSRYCQAPATKGLFRTVGHGGDSGSIEDLEKAAMSVLIGTNTAEAHPVIASRMKRAQKLFGQKIHVFDIRKHEMAERADRFYQPKPGTDLAWLSAVTKYIIDHDLHDKAFIDEWVDDFDEYYKSLETFTMAFAEEATGIPESELIKFAEECAKAESVVICWAMGITQQDIGSDSSTAISNLLLVTGNYRRPGTGAYPLRGHNNVQGCSDMGSMPDKITGYQSIEADDIRAKFEKEYGVKLNPKAGKDNHEMVEGIHDGEVHSLYLYGEDTGIVDSNINFVQAAFEKLDFMVVQDEFLTFTATYADVVLPASPSLEKDGTFTNTERRIQRLYQALEPLGDSKPDWKIFQAIANRLGFDWNYKHPSEIMDEVARLTPLYAGVSYDRLEGFNSLQWPVQPDGTDEPILYLEGFNFDNGKAKLFPLSFDNYFKQDEIYDIHVNNGRLLEHFHEGNMTYQTPMIKYKVPRAFVEISPELAEDRGIHEGAEVKLISETGEAVLQVHVTDRVKGKEIYIPLNNDAMENGDLGAINLLTNSDVDQYTDTPSYKRTSCRLEVITKRGKSPLNPNNFRVNKKRHPQYSVQVQKKWERSDYVFPGNQVDK</sequence>
<name>FDHL_STAAM</name>
<protein>
    <recommendedName>
        <fullName>Putative formate dehydrogenase SAV2309</fullName>
        <ecNumber>1.17.1.9</ecNumber>
    </recommendedName>
</protein>
<keyword id="KW-0001">2Fe-2S</keyword>
<keyword id="KW-0004">4Fe-4S</keyword>
<keyword id="KW-0408">Iron</keyword>
<keyword id="KW-0411">Iron-sulfur</keyword>
<keyword id="KW-0479">Metal-binding</keyword>
<keyword id="KW-0500">Molybdenum</keyword>
<keyword id="KW-0520">NAD</keyword>
<keyword id="KW-0560">Oxidoreductase</keyword>
<keyword id="KW-0677">Repeat</keyword>